<accession>B1X6D7</accession>
<name>SMG_ECODH</name>
<sequence>MFDVLMYLFETYIHTEAELRVDQDKLEQDLTDAGFEREDIYNALLWLEKLADYQEGLAEPMQLASDPLSMRIYTPEECERLDASCRGFLLFLEQIQVLNLETREMVIERVLALDNAEFELDDLKWVILMVLFNIPGCENAYQQMEELLFEVNEGMLH</sequence>
<protein>
    <recommendedName>
        <fullName evidence="1">Protein Smg</fullName>
    </recommendedName>
</protein>
<evidence type="ECO:0000255" key="1">
    <source>
        <dbReference type="HAMAP-Rule" id="MF_00598"/>
    </source>
</evidence>
<reference key="1">
    <citation type="journal article" date="2008" name="J. Bacteriol.">
        <title>The complete genome sequence of Escherichia coli DH10B: insights into the biology of a laboratory workhorse.</title>
        <authorList>
            <person name="Durfee T."/>
            <person name="Nelson R."/>
            <person name="Baldwin S."/>
            <person name="Plunkett G. III"/>
            <person name="Burland V."/>
            <person name="Mau B."/>
            <person name="Petrosino J.F."/>
            <person name="Qin X."/>
            <person name="Muzny D.M."/>
            <person name="Ayele M."/>
            <person name="Gibbs R.A."/>
            <person name="Csorgo B."/>
            <person name="Posfai G."/>
            <person name="Weinstock G.M."/>
            <person name="Blattner F.R."/>
        </authorList>
    </citation>
    <scope>NUCLEOTIDE SEQUENCE [LARGE SCALE GENOMIC DNA]</scope>
    <source>
        <strain>K12 / DH10B</strain>
    </source>
</reference>
<gene>
    <name evidence="1" type="primary">smg</name>
    <name type="ordered locus">ECDH10B_3459</name>
</gene>
<proteinExistence type="inferred from homology"/>
<organism>
    <name type="scientific">Escherichia coli (strain K12 / DH10B)</name>
    <dbReference type="NCBI Taxonomy" id="316385"/>
    <lineage>
        <taxon>Bacteria</taxon>
        <taxon>Pseudomonadati</taxon>
        <taxon>Pseudomonadota</taxon>
        <taxon>Gammaproteobacteria</taxon>
        <taxon>Enterobacterales</taxon>
        <taxon>Enterobacteriaceae</taxon>
        <taxon>Escherichia</taxon>
    </lineage>
</organism>
<comment type="similarity">
    <text evidence="1">Belongs to the Smg family.</text>
</comment>
<feature type="chain" id="PRO_1000129888" description="Protein Smg">
    <location>
        <begin position="1"/>
        <end position="157"/>
    </location>
</feature>
<dbReference type="EMBL" id="CP000948">
    <property type="protein sequence ID" value="ACB04347.1"/>
    <property type="molecule type" value="Genomic_DNA"/>
</dbReference>
<dbReference type="RefSeq" id="WP_000460680.1">
    <property type="nucleotide sequence ID" value="NC_010473.1"/>
</dbReference>
<dbReference type="SMR" id="B1X6D7"/>
<dbReference type="GeneID" id="93778703"/>
<dbReference type="KEGG" id="ecd:ECDH10B_3459"/>
<dbReference type="HOGENOM" id="CLU_133242_0_0_6"/>
<dbReference type="HAMAP" id="MF_00598">
    <property type="entry name" value="Smg"/>
    <property type="match status" value="1"/>
</dbReference>
<dbReference type="InterPro" id="IPR007456">
    <property type="entry name" value="Smg"/>
</dbReference>
<dbReference type="NCBIfam" id="NF002897">
    <property type="entry name" value="PRK03430.1"/>
    <property type="match status" value="1"/>
</dbReference>
<dbReference type="PANTHER" id="PTHR38692">
    <property type="entry name" value="PROTEIN SMG"/>
    <property type="match status" value="1"/>
</dbReference>
<dbReference type="PANTHER" id="PTHR38692:SF1">
    <property type="entry name" value="PROTEIN SMG"/>
    <property type="match status" value="1"/>
</dbReference>
<dbReference type="Pfam" id="PF04361">
    <property type="entry name" value="DUF494"/>
    <property type="match status" value="1"/>
</dbReference>